<sequence length="432" mass="47405">MAAPMEVAVCTDSAAPMWSCIVWELHSGANLLTYRGGQAGPRGLALLNGEYLLAAQLGKNYISAWELQRKDQLQQKIMCPGPVTCLTASPNGLYVLAGVAESIHLWEVSTGNLLVILSRHYQDVSCLQFTGDSSHFISGGKDCLVLVWSLCSVLQADPSRIPAPRHVWSHHALPITDLHCGFGGPLARVATSSLDQTVKLWEVSSGELLLSVLFDVSIMAVTMDLAEHHMFCGGSEGSIFQVDLFTWPGQRERSFHPEQDAGKVFKGHRNQVTCLSVSTDGSVLLSGSHDETVRLWDVQSKQCIRTVALKGPVTNAAILLAPVSMLSSDFRPSLPLPHFNKHLLGAEHGDEPRHGGLTLRLGLHQQGSEPSYLDRTEQLQAVLCSTMEKSVLGGQDQLRVRVTELEDEVRNLRKINRDLFDFSTRFITRPAK</sequence>
<name>WDR18_HUMAN</name>
<feature type="chain" id="PRO_0000051365" description="WD repeat-containing protein 18">
    <location>
        <begin position="1"/>
        <end position="432"/>
    </location>
</feature>
<feature type="repeat" description="WD 1">
    <location>
        <begin position="36"/>
        <end position="75"/>
    </location>
</feature>
<feature type="repeat" description="WD 2">
    <location>
        <begin position="78"/>
        <end position="116"/>
    </location>
</feature>
<feature type="repeat" description="WD 3">
    <location>
        <begin position="119"/>
        <end position="158"/>
    </location>
</feature>
<feature type="repeat" description="WD 4">
    <location>
        <begin position="170"/>
        <end position="211"/>
    </location>
</feature>
<feature type="repeat" description="WD 5">
    <location>
        <begin position="213"/>
        <end position="257"/>
    </location>
</feature>
<feature type="repeat" description="WD 6">
    <location>
        <begin position="267"/>
        <end position="306"/>
    </location>
</feature>
<feature type="sequence variant" id="VAR_031577" description="In dbSNP:rs2158367." evidence="4">
    <original>A</original>
    <variation>T</variation>
    <location>
        <position position="172"/>
    </location>
</feature>
<feature type="sequence variant" id="VAR_031578" description="In dbSNP:rs35068100.">
    <original>L</original>
    <variation>F</variation>
    <location>
        <position position="213"/>
    </location>
</feature>
<feature type="sequence variant" id="VAR_031579" description="In dbSNP:rs11538683.">
    <original>V</original>
    <variation>I</variation>
    <location>
        <position position="264"/>
    </location>
</feature>
<feature type="sequence conflict" description="In Ref. 1; AAC12679." evidence="7" ref="1">
    <location>
        <begin position="198"/>
        <end position="199"/>
    </location>
</feature>
<feature type="strand" evidence="8">
    <location>
        <begin position="6"/>
        <end position="14"/>
    </location>
</feature>
<feature type="strand" evidence="8">
    <location>
        <begin position="19"/>
        <end position="24"/>
    </location>
</feature>
<feature type="turn" evidence="8">
    <location>
        <begin position="25"/>
        <end position="27"/>
    </location>
</feature>
<feature type="strand" evidence="8">
    <location>
        <begin position="30"/>
        <end position="34"/>
    </location>
</feature>
<feature type="strand" evidence="8">
    <location>
        <begin position="39"/>
        <end position="47"/>
    </location>
</feature>
<feature type="turn" evidence="8">
    <location>
        <begin position="48"/>
        <end position="50"/>
    </location>
</feature>
<feature type="strand" evidence="8">
    <location>
        <begin position="51"/>
        <end position="56"/>
    </location>
</feature>
<feature type="strand" evidence="8">
    <location>
        <begin position="59"/>
        <end position="66"/>
    </location>
</feature>
<feature type="strand" evidence="8">
    <location>
        <begin position="83"/>
        <end position="88"/>
    </location>
</feature>
<feature type="strand" evidence="8">
    <location>
        <begin position="92"/>
        <end position="99"/>
    </location>
</feature>
<feature type="strand" evidence="8">
    <location>
        <begin position="102"/>
        <end position="107"/>
    </location>
</feature>
<feature type="turn" evidence="8">
    <location>
        <begin position="108"/>
        <end position="110"/>
    </location>
</feature>
<feature type="strand" evidence="8">
    <location>
        <begin position="113"/>
        <end position="117"/>
    </location>
</feature>
<feature type="strand" evidence="8">
    <location>
        <begin position="124"/>
        <end position="129"/>
    </location>
</feature>
<feature type="strand" evidence="8">
    <location>
        <begin position="133"/>
        <end position="140"/>
    </location>
</feature>
<feature type="strand" evidence="8">
    <location>
        <begin position="145"/>
        <end position="149"/>
    </location>
</feature>
<feature type="helix" evidence="8">
    <location>
        <begin position="150"/>
        <end position="154"/>
    </location>
</feature>
<feature type="strand" evidence="8">
    <location>
        <begin position="165"/>
        <end position="168"/>
    </location>
</feature>
<feature type="strand" evidence="8">
    <location>
        <begin position="175"/>
        <end position="180"/>
    </location>
</feature>
<feature type="strand" evidence="8">
    <location>
        <begin position="182"/>
        <end position="184"/>
    </location>
</feature>
<feature type="strand" evidence="8">
    <location>
        <begin position="188"/>
        <end position="193"/>
    </location>
</feature>
<feature type="strand" evidence="8">
    <location>
        <begin position="196"/>
        <end position="202"/>
    </location>
</feature>
<feature type="turn" evidence="8">
    <location>
        <begin position="203"/>
        <end position="205"/>
    </location>
</feature>
<feature type="strand" evidence="8">
    <location>
        <begin position="208"/>
        <end position="213"/>
    </location>
</feature>
<feature type="strand" evidence="8">
    <location>
        <begin position="218"/>
        <end position="223"/>
    </location>
</feature>
<feature type="strand" evidence="8">
    <location>
        <begin position="228"/>
        <end position="234"/>
    </location>
</feature>
<feature type="strand" evidence="8">
    <location>
        <begin position="239"/>
        <end position="244"/>
    </location>
</feature>
<feature type="strand" evidence="8">
    <location>
        <begin position="272"/>
        <end position="277"/>
    </location>
</feature>
<feature type="strand" evidence="8">
    <location>
        <begin position="279"/>
        <end position="288"/>
    </location>
</feature>
<feature type="turn" evidence="8">
    <location>
        <begin position="289"/>
        <end position="291"/>
    </location>
</feature>
<feature type="strand" evidence="8">
    <location>
        <begin position="292"/>
        <end position="297"/>
    </location>
</feature>
<feature type="turn" evidence="8">
    <location>
        <begin position="298"/>
        <end position="301"/>
    </location>
</feature>
<feature type="strand" evidence="8">
    <location>
        <begin position="302"/>
        <end position="308"/>
    </location>
</feature>
<feature type="strand" evidence="8">
    <location>
        <begin position="313"/>
        <end position="320"/>
    </location>
</feature>
<feature type="helix" evidence="8">
    <location>
        <begin position="323"/>
        <end position="326"/>
    </location>
</feature>
<feature type="helix" evidence="8">
    <location>
        <begin position="412"/>
        <end position="426"/>
    </location>
</feature>
<comment type="function">
    <text evidence="3 5 6">Functions as a component of the Five Friends of Methylated CHTOP (5FMC) complex; the 5FMC complex is recruited to ZNF148 by methylated CHTOP, leading to desumoylation of ZNF148 and subsequent transactivation of ZNF148 target genes (PubMed:22872859). Component of the PELP1 complex involved in the nucleolar steps of 28S rRNA maturation and the subsequent nucleoplasmic transit of the pre-60S ribosomal subunit (PubMed:21326211). May play a role during development (By similarity).</text>
</comment>
<comment type="subunit">
    <text evidence="5 6">Component of the 5FMC complex, at least composed of PELP1, LAS1L, TEX10, WDR18 and SENP3; the complex interacts with methylated CHTOP and ZNF148. Interacts with NOL9. Component of the PELP1 complex, composed of at least PELP1, TEX10 and WDR18. The complex interacts with pre-60S ribosome particles (PubMed:21326211).</text>
</comment>
<comment type="interaction">
    <interactant intactId="EBI-727429">
        <id>Q9BV38</id>
    </interactant>
    <interactant intactId="EBI-716449">
        <id>Q8IZL8</id>
        <label>PELP1</label>
    </interactant>
    <organismsDiffer>false</organismsDiffer>
    <experiments>18</experiments>
</comment>
<comment type="interaction">
    <interactant intactId="EBI-727429">
        <id>Q9BV38</id>
    </interactant>
    <interactant intactId="EBI-2880236">
        <id>Q9H4L4</id>
        <label>SENP3</label>
    </interactant>
    <organismsDiffer>false</organismsDiffer>
    <experiments>7</experiments>
</comment>
<comment type="interaction">
    <interactant intactId="EBI-727429">
        <id>Q9BV38</id>
    </interactant>
    <interactant intactId="EBI-2371062">
        <id>Q9NXF1</id>
        <label>TEX10</label>
    </interactant>
    <organismsDiffer>false</organismsDiffer>
    <experiments>4</experiments>
</comment>
<comment type="subcellular location">
    <subcellularLocation>
        <location evidence="5">Nucleus</location>
        <location evidence="5">Nucleolus</location>
    </subcellularLocation>
    <subcellularLocation>
        <location evidence="2">Nucleus</location>
        <location evidence="2">Nucleoplasm</location>
    </subcellularLocation>
    <subcellularLocation>
        <location evidence="2">Cytoplasm</location>
    </subcellularLocation>
    <subcellularLocation>
        <location evidence="1">Dynein axonemal particle</location>
    </subcellularLocation>
    <text evidence="2">Mainly found in the nucleoplasm, with low levels detected in the cytoplasmic and chromatin fractions.</text>
</comment>
<comment type="similarity">
    <text evidence="7">Belongs to the WD repeat IPI3/WDR18 family.</text>
</comment>
<comment type="sequence caution" evidence="7">
    <conflict type="erroneous initiation">
        <sequence resource="EMBL-CDS" id="AAC12679"/>
    </conflict>
    <text>Extended N-terminus.</text>
</comment>
<organism>
    <name type="scientific">Homo sapiens</name>
    <name type="common">Human</name>
    <dbReference type="NCBI Taxonomy" id="9606"/>
    <lineage>
        <taxon>Eukaryota</taxon>
        <taxon>Metazoa</taxon>
        <taxon>Chordata</taxon>
        <taxon>Craniata</taxon>
        <taxon>Vertebrata</taxon>
        <taxon>Euteleostomi</taxon>
        <taxon>Mammalia</taxon>
        <taxon>Eutheria</taxon>
        <taxon>Euarchontoglires</taxon>
        <taxon>Primates</taxon>
        <taxon>Haplorrhini</taxon>
        <taxon>Catarrhini</taxon>
        <taxon>Hominidae</taxon>
        <taxon>Homo</taxon>
    </lineage>
</organism>
<gene>
    <name type="primary">WDR18</name>
</gene>
<protein>
    <recommendedName>
        <fullName>WD repeat-containing protein 18</fullName>
    </recommendedName>
</protein>
<accession>Q9BV38</accession>
<accession>O60390</accession>
<accession>Q9BWR2</accession>
<dbReference type="EMBL" id="AC004528">
    <property type="protein sequence ID" value="AAC12679.1"/>
    <property type="status" value="ALT_INIT"/>
    <property type="molecule type" value="Genomic_DNA"/>
</dbReference>
<dbReference type="EMBL" id="BC000040">
    <property type="protein sequence ID" value="AAH00040.2"/>
    <property type="molecule type" value="mRNA"/>
</dbReference>
<dbReference type="EMBL" id="BC001648">
    <property type="protein sequence ID" value="AAH01648.1"/>
    <property type="molecule type" value="mRNA"/>
</dbReference>
<dbReference type="CCDS" id="CCDS12051.1"/>
<dbReference type="RefSeq" id="NP_001359014.1">
    <property type="nucleotide sequence ID" value="NM_001372085.1"/>
</dbReference>
<dbReference type="RefSeq" id="NP_077005.2">
    <property type="nucleotide sequence ID" value="NM_024100.4"/>
</dbReference>
<dbReference type="PDB" id="7UWF">
    <property type="method" value="EM"/>
    <property type="resolution" value="2.70 A"/>
    <property type="chains" value="A/B=1-432"/>
</dbReference>
<dbReference type="PDB" id="8FL2">
    <property type="method" value="EM"/>
    <property type="resolution" value="2.67 A"/>
    <property type="chains" value="NV/NW=1-432"/>
</dbReference>
<dbReference type="PDB" id="8FL3">
    <property type="method" value="EM"/>
    <property type="resolution" value="2.53 A"/>
    <property type="chains" value="NV/NW=1-432"/>
</dbReference>
<dbReference type="PDB" id="8FL4">
    <property type="method" value="EM"/>
    <property type="resolution" value="2.89 A"/>
    <property type="chains" value="NV/NW=1-432"/>
</dbReference>
<dbReference type="PDBsum" id="7UWF"/>
<dbReference type="PDBsum" id="8FL2"/>
<dbReference type="PDBsum" id="8FL3"/>
<dbReference type="PDBsum" id="8FL4"/>
<dbReference type="EMDB" id="EMD-26831"/>
<dbReference type="EMDB" id="EMD-29265"/>
<dbReference type="EMDB" id="EMD-29266"/>
<dbReference type="EMDB" id="EMD-29267"/>
<dbReference type="SMR" id="Q9BV38"/>
<dbReference type="BioGRID" id="121517">
    <property type="interactions" value="155"/>
</dbReference>
<dbReference type="ComplexPortal" id="CPX-8081">
    <property type="entry name" value="Rixosome RNA degradation complex"/>
</dbReference>
<dbReference type="CORUM" id="Q9BV38"/>
<dbReference type="FunCoup" id="Q9BV38">
    <property type="interactions" value="1942"/>
</dbReference>
<dbReference type="IntAct" id="Q9BV38">
    <property type="interactions" value="67"/>
</dbReference>
<dbReference type="MINT" id="Q9BV38"/>
<dbReference type="STRING" id="9606.ENSP00000476117"/>
<dbReference type="GlyGen" id="Q9BV38">
    <property type="glycosylation" value="1 site, 1 O-linked glycan (1 site)"/>
</dbReference>
<dbReference type="iPTMnet" id="Q9BV38"/>
<dbReference type="PhosphoSitePlus" id="Q9BV38"/>
<dbReference type="SwissPalm" id="Q9BV38"/>
<dbReference type="BioMuta" id="WDR18"/>
<dbReference type="DMDM" id="143811475"/>
<dbReference type="jPOST" id="Q9BV38"/>
<dbReference type="MassIVE" id="Q9BV38"/>
<dbReference type="PaxDb" id="9606-ENSP00000476117"/>
<dbReference type="PeptideAtlas" id="Q9BV38"/>
<dbReference type="ProteomicsDB" id="79165"/>
<dbReference type="Pumba" id="Q9BV38"/>
<dbReference type="TopDownProteomics" id="Q9BV38"/>
<dbReference type="Antibodypedia" id="22464">
    <property type="antibodies" value="148 antibodies from 28 providers"/>
</dbReference>
<dbReference type="DNASU" id="57418"/>
<dbReference type="Ensembl" id="ENST00000585809.6">
    <property type="protein sequence ID" value="ENSP00000476117.3"/>
    <property type="gene ID" value="ENSG00000065268.11"/>
</dbReference>
<dbReference type="GeneID" id="57418"/>
<dbReference type="KEGG" id="hsa:57418"/>
<dbReference type="MANE-Select" id="ENST00000585809.6">
    <property type="protein sequence ID" value="ENSP00000476117.3"/>
    <property type="RefSeq nucleotide sequence ID" value="NM_024100.4"/>
    <property type="RefSeq protein sequence ID" value="NP_077005.2"/>
</dbReference>
<dbReference type="UCSC" id="uc002lqm.2">
    <property type="organism name" value="human"/>
</dbReference>
<dbReference type="AGR" id="HGNC:17956"/>
<dbReference type="CTD" id="57418"/>
<dbReference type="DisGeNET" id="57418"/>
<dbReference type="GeneCards" id="WDR18"/>
<dbReference type="HGNC" id="HGNC:17956">
    <property type="gene designation" value="WDR18"/>
</dbReference>
<dbReference type="HPA" id="ENSG00000065268">
    <property type="expression patterns" value="Low tissue specificity"/>
</dbReference>
<dbReference type="MIM" id="620291">
    <property type="type" value="gene"/>
</dbReference>
<dbReference type="neXtProt" id="NX_Q9BV38"/>
<dbReference type="OpenTargets" id="ENSG00000065268"/>
<dbReference type="PharmGKB" id="PA38269"/>
<dbReference type="VEuPathDB" id="HostDB:ENSG00000065268"/>
<dbReference type="eggNOG" id="KOG0646">
    <property type="taxonomic scope" value="Eukaryota"/>
</dbReference>
<dbReference type="GeneTree" id="ENSGT00390000000289"/>
<dbReference type="InParanoid" id="Q9BV38"/>
<dbReference type="OMA" id="GVNARIY"/>
<dbReference type="OrthoDB" id="756370at2759"/>
<dbReference type="PAN-GO" id="Q9BV38">
    <property type="GO annotations" value="4 GO annotations based on evolutionary models"/>
</dbReference>
<dbReference type="PhylomeDB" id="Q9BV38"/>
<dbReference type="TreeFam" id="TF313046"/>
<dbReference type="PathwayCommons" id="Q9BV38"/>
<dbReference type="Reactome" id="R-HSA-6791226">
    <property type="pathway name" value="Major pathway of rRNA processing in the nucleolus and cytosol"/>
</dbReference>
<dbReference type="SignaLink" id="Q9BV38"/>
<dbReference type="SIGNOR" id="Q9BV38"/>
<dbReference type="BioGRID-ORCS" id="57418">
    <property type="hits" value="767 hits in 1150 CRISPR screens"/>
</dbReference>
<dbReference type="CD-CODE" id="91857CE7">
    <property type="entry name" value="Nucleolus"/>
</dbReference>
<dbReference type="ChiTaRS" id="WDR18">
    <property type="organism name" value="human"/>
</dbReference>
<dbReference type="GenomeRNAi" id="57418"/>
<dbReference type="Pharos" id="Q9BV38">
    <property type="development level" value="Tbio"/>
</dbReference>
<dbReference type="PRO" id="PR:Q9BV38"/>
<dbReference type="Proteomes" id="UP000005640">
    <property type="component" value="Chromosome 19"/>
</dbReference>
<dbReference type="RNAct" id="Q9BV38">
    <property type="molecule type" value="protein"/>
</dbReference>
<dbReference type="Bgee" id="ENSG00000065268">
    <property type="expression patterns" value="Expressed in right hemisphere of cerebellum and 121 other cell types or tissues"/>
</dbReference>
<dbReference type="ExpressionAtlas" id="Q9BV38">
    <property type="expression patterns" value="baseline and differential"/>
</dbReference>
<dbReference type="GO" id="GO:0120293">
    <property type="term" value="C:dynein axonemal particle"/>
    <property type="evidence" value="ECO:0000250"/>
    <property type="project" value="UniProtKB"/>
</dbReference>
<dbReference type="GO" id="GO:0005656">
    <property type="term" value="C:nuclear pre-replicative complex"/>
    <property type="evidence" value="ECO:0000318"/>
    <property type="project" value="GO_Central"/>
</dbReference>
<dbReference type="GO" id="GO:0005730">
    <property type="term" value="C:nucleolus"/>
    <property type="evidence" value="ECO:0007669"/>
    <property type="project" value="UniProtKB-SubCell"/>
</dbReference>
<dbReference type="GO" id="GO:0005654">
    <property type="term" value="C:nucleoplasm"/>
    <property type="evidence" value="ECO:0000314"/>
    <property type="project" value="HPA"/>
</dbReference>
<dbReference type="GO" id="GO:0120330">
    <property type="term" value="C:rixosome complex"/>
    <property type="evidence" value="ECO:0000318"/>
    <property type="project" value="GO_Central"/>
</dbReference>
<dbReference type="GO" id="GO:0006261">
    <property type="term" value="P:DNA-templated DNA replication"/>
    <property type="evidence" value="ECO:0000318"/>
    <property type="project" value="GO_Central"/>
</dbReference>
<dbReference type="GO" id="GO:0006364">
    <property type="term" value="P:rRNA processing"/>
    <property type="evidence" value="ECO:0000318"/>
    <property type="project" value="GO_Central"/>
</dbReference>
<dbReference type="FunFam" id="2.130.10.10:FF:000444">
    <property type="entry name" value="WD repeat domain 18"/>
    <property type="match status" value="1"/>
</dbReference>
<dbReference type="FunFam" id="2.130.10.10:FF:000467">
    <property type="entry name" value="WD repeat domain 18"/>
    <property type="match status" value="1"/>
</dbReference>
<dbReference type="Gene3D" id="2.130.10.10">
    <property type="entry name" value="YVTN repeat-like/Quinoprotein amine dehydrogenase"/>
    <property type="match status" value="2"/>
</dbReference>
<dbReference type="InterPro" id="IPR020472">
    <property type="entry name" value="G-protein_beta_WD-40_rep"/>
</dbReference>
<dbReference type="InterPro" id="IPR015943">
    <property type="entry name" value="WD40/YVTN_repeat-like_dom_sf"/>
</dbReference>
<dbReference type="InterPro" id="IPR019775">
    <property type="entry name" value="WD40_repeat_CS"/>
</dbReference>
<dbReference type="InterPro" id="IPR036322">
    <property type="entry name" value="WD40_repeat_dom_sf"/>
</dbReference>
<dbReference type="InterPro" id="IPR001680">
    <property type="entry name" value="WD40_rpt"/>
</dbReference>
<dbReference type="InterPro" id="IPR045227">
    <property type="entry name" value="WDR18/Ipi3/RID3"/>
</dbReference>
<dbReference type="InterPro" id="IPR026987">
    <property type="entry name" value="Wdr18_C_dom"/>
</dbReference>
<dbReference type="PANTHER" id="PTHR18763:SF0">
    <property type="entry name" value="WD REPEAT-CONTAINING PROTEIN 18"/>
    <property type="match status" value="1"/>
</dbReference>
<dbReference type="PANTHER" id="PTHR18763">
    <property type="entry name" value="WD-REPEAT PROTEIN 18"/>
    <property type="match status" value="1"/>
</dbReference>
<dbReference type="Pfam" id="PF00400">
    <property type="entry name" value="WD40"/>
    <property type="match status" value="3"/>
</dbReference>
<dbReference type="Pfam" id="PF14077">
    <property type="entry name" value="WD40_alt"/>
    <property type="match status" value="1"/>
</dbReference>
<dbReference type="PRINTS" id="PR00320">
    <property type="entry name" value="GPROTEINBRPT"/>
</dbReference>
<dbReference type="SMART" id="SM00320">
    <property type="entry name" value="WD40"/>
    <property type="match status" value="4"/>
</dbReference>
<dbReference type="SUPFAM" id="SSF50978">
    <property type="entry name" value="WD40 repeat-like"/>
    <property type="match status" value="1"/>
</dbReference>
<dbReference type="PROSITE" id="PS00678">
    <property type="entry name" value="WD_REPEATS_1"/>
    <property type="match status" value="2"/>
</dbReference>
<dbReference type="PROSITE" id="PS50082">
    <property type="entry name" value="WD_REPEATS_2"/>
    <property type="match status" value="3"/>
</dbReference>
<dbReference type="PROSITE" id="PS50294">
    <property type="entry name" value="WD_REPEATS_REGION"/>
    <property type="match status" value="1"/>
</dbReference>
<keyword id="KW-0002">3D-structure</keyword>
<keyword id="KW-0963">Cytoplasm</keyword>
<keyword id="KW-0217">Developmental protein</keyword>
<keyword id="KW-0539">Nucleus</keyword>
<keyword id="KW-1267">Proteomics identification</keyword>
<keyword id="KW-1185">Reference proteome</keyword>
<keyword id="KW-0677">Repeat</keyword>
<keyword id="KW-0853">WD repeat</keyword>
<proteinExistence type="evidence at protein level"/>
<evidence type="ECO:0000250" key="1">
    <source>
        <dbReference type="UniProtKB" id="A0A1L8HX76"/>
    </source>
</evidence>
<evidence type="ECO:0000250" key="2">
    <source>
        <dbReference type="UniProtKB" id="Q4VBE8"/>
    </source>
</evidence>
<evidence type="ECO:0000250" key="3">
    <source>
        <dbReference type="UniProtKB" id="Q68EI0"/>
    </source>
</evidence>
<evidence type="ECO:0000269" key="4">
    <source>
    </source>
</evidence>
<evidence type="ECO:0000269" key="5">
    <source>
    </source>
</evidence>
<evidence type="ECO:0000269" key="6">
    <source>
    </source>
</evidence>
<evidence type="ECO:0000305" key="7"/>
<evidence type="ECO:0007829" key="8">
    <source>
        <dbReference type="PDB" id="7UWF"/>
    </source>
</evidence>
<reference key="1">
    <citation type="journal article" date="2004" name="Nature">
        <title>The DNA sequence and biology of human chromosome 19.</title>
        <authorList>
            <person name="Grimwood J."/>
            <person name="Gordon L.A."/>
            <person name="Olsen A.S."/>
            <person name="Terry A."/>
            <person name="Schmutz J."/>
            <person name="Lamerdin J.E."/>
            <person name="Hellsten U."/>
            <person name="Goodstein D."/>
            <person name="Couronne O."/>
            <person name="Tran-Gyamfi M."/>
            <person name="Aerts A."/>
            <person name="Altherr M."/>
            <person name="Ashworth L."/>
            <person name="Bajorek E."/>
            <person name="Black S."/>
            <person name="Branscomb E."/>
            <person name="Caenepeel S."/>
            <person name="Carrano A.V."/>
            <person name="Caoile C."/>
            <person name="Chan Y.M."/>
            <person name="Christensen M."/>
            <person name="Cleland C.A."/>
            <person name="Copeland A."/>
            <person name="Dalin E."/>
            <person name="Dehal P."/>
            <person name="Denys M."/>
            <person name="Detter J.C."/>
            <person name="Escobar J."/>
            <person name="Flowers D."/>
            <person name="Fotopulos D."/>
            <person name="Garcia C."/>
            <person name="Georgescu A.M."/>
            <person name="Glavina T."/>
            <person name="Gomez M."/>
            <person name="Gonzales E."/>
            <person name="Groza M."/>
            <person name="Hammon N."/>
            <person name="Hawkins T."/>
            <person name="Haydu L."/>
            <person name="Ho I."/>
            <person name="Huang W."/>
            <person name="Israni S."/>
            <person name="Jett J."/>
            <person name="Kadner K."/>
            <person name="Kimball H."/>
            <person name="Kobayashi A."/>
            <person name="Larionov V."/>
            <person name="Leem S.-H."/>
            <person name="Lopez F."/>
            <person name="Lou Y."/>
            <person name="Lowry S."/>
            <person name="Malfatti S."/>
            <person name="Martinez D."/>
            <person name="McCready P.M."/>
            <person name="Medina C."/>
            <person name="Morgan J."/>
            <person name="Nelson K."/>
            <person name="Nolan M."/>
            <person name="Ovcharenko I."/>
            <person name="Pitluck S."/>
            <person name="Pollard M."/>
            <person name="Popkie A.P."/>
            <person name="Predki P."/>
            <person name="Quan G."/>
            <person name="Ramirez L."/>
            <person name="Rash S."/>
            <person name="Retterer J."/>
            <person name="Rodriguez A."/>
            <person name="Rogers S."/>
            <person name="Salamov A."/>
            <person name="Salazar A."/>
            <person name="She X."/>
            <person name="Smith D."/>
            <person name="Slezak T."/>
            <person name="Solovyev V."/>
            <person name="Thayer N."/>
            <person name="Tice H."/>
            <person name="Tsai M."/>
            <person name="Ustaszewska A."/>
            <person name="Vo N."/>
            <person name="Wagner M."/>
            <person name="Wheeler J."/>
            <person name="Wu K."/>
            <person name="Xie G."/>
            <person name="Yang J."/>
            <person name="Dubchak I."/>
            <person name="Furey T.S."/>
            <person name="DeJong P."/>
            <person name="Dickson M."/>
            <person name="Gordon D."/>
            <person name="Eichler E.E."/>
            <person name="Pennacchio L.A."/>
            <person name="Richardson P."/>
            <person name="Stubbs L."/>
            <person name="Rokhsar D.S."/>
            <person name="Myers R.M."/>
            <person name="Rubin E.M."/>
            <person name="Lucas S.M."/>
        </authorList>
    </citation>
    <scope>NUCLEOTIDE SEQUENCE [LARGE SCALE GENOMIC DNA]</scope>
</reference>
<reference key="2">
    <citation type="journal article" date="2004" name="Genome Res.">
        <title>The status, quality, and expansion of the NIH full-length cDNA project: the Mammalian Gene Collection (MGC).</title>
        <authorList>
            <consortium name="The MGC Project Team"/>
        </authorList>
    </citation>
    <scope>NUCLEOTIDE SEQUENCE [LARGE SCALE MRNA]</scope>
    <scope>VARIANT THR-172</scope>
    <source>
        <tissue>Brain</tissue>
        <tissue>Lung</tissue>
    </source>
</reference>
<reference key="3">
    <citation type="journal article" date="2011" name="BMC Syst. Biol.">
        <title>Initial characterization of the human central proteome.</title>
        <authorList>
            <person name="Burkard T.R."/>
            <person name="Planyavsky M."/>
            <person name="Kaupe I."/>
            <person name="Breitwieser F.P."/>
            <person name="Buerckstuemmer T."/>
            <person name="Bennett K.L."/>
            <person name="Superti-Furga G."/>
            <person name="Colinge J."/>
        </authorList>
    </citation>
    <scope>IDENTIFICATION BY MASS SPECTROMETRY [LARGE SCALE ANALYSIS]</scope>
</reference>
<reference key="4">
    <citation type="journal article" date="2011" name="EMBO J.">
        <title>The SUMO system controls nucleolar partitioning of a novel mammalian ribosome biogenesis complex.</title>
        <authorList>
            <person name="Finkbeiner E."/>
            <person name="Haindl M."/>
            <person name="Muller S."/>
        </authorList>
    </citation>
    <scope>IDENTIFICATION IN THE PELP1 COMPLEX</scope>
    <scope>SUBCELLULAR LOCATION</scope>
</reference>
<reference key="5">
    <citation type="journal article" date="2012" name="Mol. Cell. Proteomics">
        <title>Five friends of methylated chromatin target of protein-arginine-methyltransferase[prmt]-1 (chtop), a complex linking arginine methylation to desumoylation.</title>
        <authorList>
            <person name="Fanis P."/>
            <person name="Gillemans N."/>
            <person name="Aghajanirefah A."/>
            <person name="Pourfarzad F."/>
            <person name="Demmers J."/>
            <person name="Esteghamat F."/>
            <person name="Vadlamudi R.K."/>
            <person name="Grosveld F."/>
            <person name="Philipsen S."/>
            <person name="van Dijk T.B."/>
        </authorList>
    </citation>
    <scope>FUNCTION</scope>
    <scope>IDENTIFICATION IN THE 5FMC COMPLEX</scope>
</reference>